<gene>
    <name type="primary">28</name>
</gene>
<reference key="1">
    <citation type="journal article" date="1992" name="J. Virol.">
        <title>Primary structure of the herpesvirus saimiri genome.</title>
        <authorList>
            <person name="Albrecht J.-C."/>
            <person name="Nicholas J."/>
            <person name="Biller D."/>
            <person name="Cameron K.R."/>
            <person name="Biesinger B."/>
            <person name="Newman C."/>
            <person name="Wittmann S."/>
            <person name="Craxton M.A."/>
            <person name="Coleman H."/>
            <person name="Fleckenstein B."/>
            <person name="Honess R.W."/>
        </authorList>
    </citation>
    <scope>NUCLEOTIDE SEQUENCE [LARGE SCALE GENOMIC DNA]</scope>
</reference>
<proteinExistence type="predicted"/>
<dbReference type="EMBL" id="X64346">
    <property type="protein sequence ID" value="CAA45651.1"/>
    <property type="molecule type" value="Genomic_DNA"/>
</dbReference>
<dbReference type="RefSeq" id="NP_040230.1">
    <property type="nucleotide sequence ID" value="NC_001350.1"/>
</dbReference>
<dbReference type="KEGG" id="vg:1682504"/>
<dbReference type="Proteomes" id="UP000000587">
    <property type="component" value="Segment"/>
</dbReference>
<name>VG28_SHV21</name>
<organism>
    <name type="scientific">Saimiriine herpesvirus 2 (strain 11)</name>
    <name type="common">SaHV-2</name>
    <name type="synonym">Herpesvirus saimiri</name>
    <dbReference type="NCBI Taxonomy" id="10383"/>
    <lineage>
        <taxon>Viruses</taxon>
        <taxon>Duplodnaviria</taxon>
        <taxon>Heunggongvirae</taxon>
        <taxon>Peploviricota</taxon>
        <taxon>Herviviricetes</taxon>
        <taxon>Herpesvirales</taxon>
        <taxon>Orthoherpesviridae</taxon>
        <taxon>Gammaherpesvirinae</taxon>
        <taxon>Rhadinovirus</taxon>
        <taxon>Rhadinovirus saimiriinegamma2</taxon>
        <taxon>Saimiriine herpesvirus 2</taxon>
    </lineage>
</organism>
<accession>Q01009</accession>
<protein>
    <recommendedName>
        <fullName>Uncharacterized gene 28 protein</fullName>
    </recommendedName>
</protein>
<organismHost>
    <name type="scientific">Saimiri sciureus</name>
    <name type="common">Common squirrel monkey</name>
    <dbReference type="NCBI Taxonomy" id="9521"/>
</organismHost>
<keyword id="KW-1185">Reference proteome</keyword>
<feature type="chain" id="PRO_0000116344" description="Uncharacterized gene 28 protein">
    <location>
        <begin position="1"/>
        <end position="93"/>
    </location>
</feature>
<sequence>MATTVAPSSSLWTPSWKTSAFGIILLICLCLIIYGIYKVIRICIIPAAMTATPAGELLVHINYYKKAKIYYNQINFYVLLSGLKMCLFEVAKK</sequence>